<accession>Q9NZ81</accession>
<accession>Q0V8U0</accession>
<accession>Q6FIG7</accession>
<accession>Q6MZP8</accession>
<accession>Q6NXQ6</accession>
<accession>Q6PKF9</accession>
<proteinExistence type="evidence at protein level"/>
<reference key="1">
    <citation type="journal article" date="2000" name="Genome Res.">
        <title>Cloning and functional analysis of cDNAs with open reading frames for 300 previously undefined genes expressed in CD34+ hematopoietic stem/progenitor cells.</title>
        <authorList>
            <person name="Zhang Q.-H."/>
            <person name="Ye M."/>
            <person name="Wu X.-Y."/>
            <person name="Ren S.-X."/>
            <person name="Zhao M."/>
            <person name="Zhao C.-J."/>
            <person name="Fu G."/>
            <person name="Shen Y."/>
            <person name="Fan H.-Y."/>
            <person name="Lu G."/>
            <person name="Zhong M."/>
            <person name="Xu X.-R."/>
            <person name="Han Z.-G."/>
            <person name="Zhang J.-W."/>
            <person name="Tao J."/>
            <person name="Huang Q.-H."/>
            <person name="Zhou J."/>
            <person name="Hu G.-X."/>
            <person name="Gu J."/>
            <person name="Chen S.-J."/>
            <person name="Chen Z."/>
        </authorList>
    </citation>
    <scope>NUCLEOTIDE SEQUENCE [LARGE SCALE MRNA] (ISOFORM 1)</scope>
    <source>
        <tissue>Bone marrow</tissue>
    </source>
</reference>
<reference key="2">
    <citation type="submission" date="2004-06" db="EMBL/GenBank/DDBJ databases">
        <title>Cloning of human full open reading frames in Gateway(TM) system entry vector (pDONR201).</title>
        <authorList>
            <person name="Ebert L."/>
            <person name="Schick M."/>
            <person name="Neubert P."/>
            <person name="Schatten R."/>
            <person name="Henze S."/>
            <person name="Korn B."/>
        </authorList>
    </citation>
    <scope>NUCLEOTIDE SEQUENCE [LARGE SCALE MRNA] (ISOFORM 1)</scope>
</reference>
<reference key="3">
    <citation type="journal article" date="2007" name="BMC Genomics">
        <title>The full-ORF clone resource of the German cDNA consortium.</title>
        <authorList>
            <person name="Bechtel S."/>
            <person name="Rosenfelder H."/>
            <person name="Duda A."/>
            <person name="Schmidt C.P."/>
            <person name="Ernst U."/>
            <person name="Wellenreuther R."/>
            <person name="Mehrle A."/>
            <person name="Schuster C."/>
            <person name="Bahr A."/>
            <person name="Bloecker H."/>
            <person name="Heubner D."/>
            <person name="Hoerlein A."/>
            <person name="Michel G."/>
            <person name="Wedler H."/>
            <person name="Koehrer K."/>
            <person name="Ottenwaelder B."/>
            <person name="Poustka A."/>
            <person name="Wiemann S."/>
            <person name="Schupp I."/>
        </authorList>
    </citation>
    <scope>NUCLEOTIDE SEQUENCE [LARGE SCALE MRNA] (ISOFORM 2)</scope>
</reference>
<reference key="4">
    <citation type="submission" date="2005-09" db="EMBL/GenBank/DDBJ databases">
        <authorList>
            <person name="Mural R.J."/>
            <person name="Istrail S."/>
            <person name="Sutton G.G."/>
            <person name="Florea L."/>
            <person name="Halpern A.L."/>
            <person name="Mobarry C.M."/>
            <person name="Lippert R."/>
            <person name="Walenz B."/>
            <person name="Shatkay H."/>
            <person name="Dew I."/>
            <person name="Miller J.R."/>
            <person name="Flanigan M.J."/>
            <person name="Edwards N.J."/>
            <person name="Bolanos R."/>
            <person name="Fasulo D."/>
            <person name="Halldorsson B.V."/>
            <person name="Hannenhalli S."/>
            <person name="Turner R."/>
            <person name="Yooseph S."/>
            <person name="Lu F."/>
            <person name="Nusskern D.R."/>
            <person name="Shue B.C."/>
            <person name="Zheng X.H."/>
            <person name="Zhong F."/>
            <person name="Delcher A.L."/>
            <person name="Huson D.H."/>
            <person name="Kravitz S.A."/>
            <person name="Mouchard L."/>
            <person name="Reinert K."/>
            <person name="Remington K.A."/>
            <person name="Clark A.G."/>
            <person name="Waterman M.S."/>
            <person name="Eichler E.E."/>
            <person name="Adams M.D."/>
            <person name="Hunkapiller M.W."/>
            <person name="Myers E.W."/>
            <person name="Venter J.C."/>
        </authorList>
    </citation>
    <scope>NUCLEOTIDE SEQUENCE [LARGE SCALE GENOMIC DNA]</scope>
</reference>
<reference key="5">
    <citation type="journal article" date="2004" name="Genome Res.">
        <title>The status, quality, and expansion of the NIH full-length cDNA project: the Mammalian Gene Collection (MGC).</title>
        <authorList>
            <consortium name="The MGC Project Team"/>
        </authorList>
    </citation>
    <scope>NUCLEOTIDE SEQUENCE [LARGE SCALE MRNA] (ISOFORM 1)</scope>
    <source>
        <tissue>Brain</tissue>
        <tissue>Placenta</tissue>
    </source>
</reference>
<reference key="6">
    <citation type="journal article" date="2006" name="Genes Dev.">
        <title>Txr1: a transcriptional regulator of thrombospondin-1 that modulates cellular sensitivity to taxanes.</title>
        <authorList>
            <person name="Lih C.-J."/>
            <person name="Wei W."/>
            <person name="Cohen S.N."/>
        </authorList>
    </citation>
    <scope>FUNCTION</scope>
    <scope>SUBCELLULAR LOCATION</scope>
    <scope>ALTERNATIVE SPLICING</scope>
</reference>
<organism>
    <name type="scientific">Homo sapiens</name>
    <name type="common">Human</name>
    <dbReference type="NCBI Taxonomy" id="9606"/>
    <lineage>
        <taxon>Eukaryota</taxon>
        <taxon>Metazoa</taxon>
        <taxon>Chordata</taxon>
        <taxon>Craniata</taxon>
        <taxon>Vertebrata</taxon>
        <taxon>Euteleostomi</taxon>
        <taxon>Mammalia</taxon>
        <taxon>Eutheria</taxon>
        <taxon>Euarchontoglires</taxon>
        <taxon>Primates</taxon>
        <taxon>Haplorrhini</taxon>
        <taxon>Catarrhini</taxon>
        <taxon>Hominidae</taxon>
        <taxon>Homo</taxon>
    </lineage>
</organism>
<comment type="function">
    <text evidence="2">Negatively regulates TSP1 expression at the level of transcription. This down-regulation was shown to reduce taxane-induced apoptosis.</text>
</comment>
<comment type="interaction">
    <interactant intactId="EBI-740924">
        <id>Q9NZ81</id>
    </interactant>
    <interactant intactId="EBI-297683">
        <id>Q96CW1</id>
        <label>AP2M1</label>
    </interactant>
    <organismsDiffer>false</organismsDiffer>
    <experiments>3</experiments>
</comment>
<comment type="interaction">
    <interactant intactId="EBI-740924">
        <id>Q9NZ81</id>
    </interactant>
    <interactant intactId="EBI-525456">
        <id>Q9UQB8</id>
        <label>BAIAP2</label>
    </interactant>
    <organismsDiffer>false</organismsDiffer>
    <experiments>3</experiments>
</comment>
<comment type="interaction">
    <interactant intactId="EBI-740924">
        <id>Q9NZ81</id>
    </interactant>
    <interactant intactId="EBI-12196065">
        <id>Q8N7E2</id>
        <label>CBLL2</label>
    </interactant>
    <organismsDiffer>false</organismsDiffer>
    <experiments>3</experiments>
</comment>
<comment type="interaction">
    <interactant intactId="EBI-740924">
        <id>Q9NZ81</id>
    </interactant>
    <interactant intactId="EBI-12139335">
        <id>Q8N6W0</id>
        <label>CELF5</label>
    </interactant>
    <organismsDiffer>false</organismsDiffer>
    <experiments>3</experiments>
</comment>
<comment type="interaction">
    <interactant intactId="EBI-740924">
        <id>Q9NZ81</id>
    </interactant>
    <interactant intactId="EBI-724310">
        <id>Q15038</id>
        <label>DAZAP2</label>
    </interactant>
    <organismsDiffer>false</organismsDiffer>
    <experiments>3</experiments>
</comment>
<comment type="interaction">
    <interactant intactId="EBI-740924">
        <id>Q9NZ81</id>
    </interactant>
    <interactant intactId="EBI-739789">
        <id>Q92997</id>
        <label>DVL3</label>
    </interactant>
    <organismsDiffer>false</organismsDiffer>
    <experiments>3</experiments>
</comment>
<comment type="interaction">
    <interactant intactId="EBI-740924">
        <id>Q9NZ81</id>
    </interactant>
    <interactant intactId="EBI-739737">
        <id>Q01844</id>
        <label>EWSR1</label>
    </interactant>
    <organismsDiffer>false</organismsDiffer>
    <experiments>3</experiments>
</comment>
<comment type="interaction">
    <interactant intactId="EBI-740924">
        <id>Q9NZ81</id>
    </interactant>
    <interactant intactId="EBI-10268158">
        <id>Q8N9E0</id>
        <label>FAM133A</label>
    </interactant>
    <organismsDiffer>false</organismsDiffer>
    <experiments>3</experiments>
</comment>
<comment type="interaction">
    <interactant intactId="EBI-740924">
        <id>Q9NZ81</id>
    </interactant>
    <interactant intactId="EBI-12121668">
        <id>Q96AE4-2</id>
        <label>FUBP1</label>
    </interactant>
    <organismsDiffer>false</organismsDiffer>
    <experiments>3</experiments>
</comment>
<comment type="interaction">
    <interactant intactId="EBI-740924">
        <id>Q9NZ81</id>
    </interactant>
    <interactant intactId="EBI-12142839">
        <id>U3KQK0</id>
        <label>H2BC15</label>
    </interactant>
    <organismsDiffer>false</organismsDiffer>
    <experiments>3</experiments>
</comment>
<comment type="interaction">
    <interactant intactId="EBI-740924">
        <id>Q9NZ81</id>
    </interactant>
    <interactant intactId="EBI-17178971">
        <id>Q14005-2</id>
        <label>IL16</label>
    </interactant>
    <organismsDiffer>false</organismsDiffer>
    <experiments>3</experiments>
</comment>
<comment type="interaction">
    <interactant intactId="EBI-740924">
        <id>Q9NZ81</id>
    </interactant>
    <interactant intactId="EBI-9089060">
        <id>Q7Z7F0-4</id>
        <label>KHDC4</label>
    </interactant>
    <organismsDiffer>false</organismsDiffer>
    <experiments>3</experiments>
</comment>
<comment type="interaction">
    <interactant intactId="EBI-740924">
        <id>Q9NZ81</id>
    </interactant>
    <interactant intactId="EBI-740929">
        <id>Q53G59</id>
        <label>KLHL12</label>
    </interactant>
    <organismsDiffer>false</organismsDiffer>
    <experiments>7</experiments>
</comment>
<comment type="interaction">
    <interactant intactId="EBI-740924">
        <id>Q9NZ81</id>
    </interactant>
    <interactant intactId="EBI-10172150">
        <id>P60370</id>
        <label>KRTAP10-5</label>
    </interactant>
    <organismsDiffer>false</organismsDiffer>
    <experiments>3</experiments>
</comment>
<comment type="interaction">
    <interactant intactId="EBI-740924">
        <id>Q9NZ81</id>
    </interactant>
    <interactant intactId="EBI-10172290">
        <id>P60409</id>
        <label>KRTAP10-7</label>
    </interactant>
    <organismsDiffer>false</organismsDiffer>
    <experiments>3</experiments>
</comment>
<comment type="interaction">
    <interactant intactId="EBI-740924">
        <id>Q9NZ81</id>
    </interactant>
    <interactant intactId="EBI-10171774">
        <id>P60410</id>
        <label>KRTAP10-8</label>
    </interactant>
    <organismsDiffer>false</organismsDiffer>
    <experiments>6</experiments>
</comment>
<comment type="interaction">
    <interactant intactId="EBI-740924">
        <id>Q9NZ81</id>
    </interactant>
    <interactant intactId="EBI-11992140">
        <id>Q3LI76</id>
        <label>KRTAP15-1</label>
    </interactant>
    <organismsDiffer>false</organismsDiffer>
    <experiments>3</experiments>
</comment>
<comment type="interaction">
    <interactant intactId="EBI-740924">
        <id>Q9NZ81</id>
    </interactant>
    <interactant intactId="EBI-1048945">
        <id>Q3LI72</id>
        <label>KRTAP19-5</label>
    </interactant>
    <organismsDiffer>false</organismsDiffer>
    <experiments>5</experiments>
</comment>
<comment type="interaction">
    <interactant intactId="EBI-740924">
        <id>Q9NZ81</id>
    </interactant>
    <interactant intactId="EBI-10241353">
        <id>Q3SYF9</id>
        <label>KRTAP19-7</label>
    </interactant>
    <organismsDiffer>false</organismsDiffer>
    <experiments>3</experiments>
</comment>
<comment type="interaction">
    <interactant intactId="EBI-740924">
        <id>Q9NZ81</id>
    </interactant>
    <interactant intactId="EBI-18395721">
        <id>Q3LI59</id>
        <label>KRTAP21-2</label>
    </interactant>
    <organismsDiffer>false</organismsDiffer>
    <experiments>3</experiments>
</comment>
<comment type="interaction">
    <interactant intactId="EBI-740924">
        <id>Q9NZ81</id>
    </interactant>
    <interactant intactId="EBI-12111050">
        <id>Q3LI64</id>
        <label>KRTAP6-1</label>
    </interactant>
    <organismsDiffer>false</organismsDiffer>
    <experiments>5</experiments>
</comment>
<comment type="interaction">
    <interactant intactId="EBI-740924">
        <id>Q9NZ81</id>
    </interactant>
    <interactant intactId="EBI-11962084">
        <id>Q3LI66</id>
        <label>KRTAP6-2</label>
    </interactant>
    <organismsDiffer>false</organismsDiffer>
    <experiments>6</experiments>
</comment>
<comment type="interaction">
    <interactant intactId="EBI-740924">
        <id>Q9NZ81</id>
    </interactant>
    <interactant intactId="EBI-22311199">
        <id>Q3LI67</id>
        <label>KRTAP6-3</label>
    </interactant>
    <organismsDiffer>false</organismsDiffer>
    <experiments>3</experiments>
</comment>
<comment type="interaction">
    <interactant intactId="EBI-740924">
        <id>Q9NZ81</id>
    </interactant>
    <interactant intactId="EBI-18394498">
        <id>Q8IUC3</id>
        <label>KRTAP7-1</label>
    </interactant>
    <organismsDiffer>false</organismsDiffer>
    <experiments>3</experiments>
</comment>
<comment type="interaction">
    <interactant intactId="EBI-740924">
        <id>Q9NZ81</id>
    </interactant>
    <interactant intactId="EBI-10261141">
        <id>Q8IUC2</id>
        <label>KRTAP8-1</label>
    </interactant>
    <organismsDiffer>false</organismsDiffer>
    <experiments>3</experiments>
</comment>
<comment type="interaction">
    <interactant intactId="EBI-740924">
        <id>Q9NZ81</id>
    </interactant>
    <interactant intactId="EBI-1170392">
        <id>P17931</id>
        <label>LGALS3</label>
    </interactant>
    <organismsDiffer>false</organismsDiffer>
    <experiments>4</experiments>
</comment>
<comment type="interaction">
    <interactant intactId="EBI-740924">
        <id>Q9NZ81</id>
    </interactant>
    <interactant intactId="EBI-10187804">
        <id>Q6NVH9</id>
        <label>LGALS3</label>
    </interactant>
    <organismsDiffer>false</organismsDiffer>
    <experiments>3</experiments>
</comment>
<comment type="interaction">
    <interactant intactId="EBI-740924">
        <id>Q9NZ81</id>
    </interactant>
    <interactant intactId="EBI-739832">
        <id>Q8TBB1</id>
        <label>LNX1</label>
    </interactant>
    <organismsDiffer>false</organismsDiffer>
    <experiments>4</experiments>
</comment>
<comment type="interaction">
    <interactant intactId="EBI-740924">
        <id>Q9NZ81</id>
    </interactant>
    <interactant intactId="EBI-6447480">
        <id>P35548</id>
        <label>MSX2</label>
    </interactant>
    <organismsDiffer>false</organismsDiffer>
    <experiments>3</experiments>
</comment>
<comment type="interaction">
    <interactant intactId="EBI-740924">
        <id>Q9NZ81</id>
    </interactant>
    <interactant intactId="EBI-740446">
        <id>P32242</id>
        <label>OTX1</label>
    </interactant>
    <organismsDiffer>false</organismsDiffer>
    <experiments>3</experiments>
</comment>
<comment type="interaction">
    <interactant intactId="EBI-740924">
        <id>Q9NZ81</id>
    </interactant>
    <interactant intactId="EBI-597835">
        <id>P50542</id>
        <label>PEX5</label>
    </interactant>
    <organismsDiffer>false</organismsDiffer>
    <experiments>3</experiments>
</comment>
<comment type="interaction">
    <interactant intactId="EBI-740924">
        <id>Q9NZ81</id>
    </interactant>
    <interactant intactId="EBI-740019">
        <id>O15162</id>
        <label>PLSCR1</label>
    </interactant>
    <organismsDiffer>false</organismsDiffer>
    <experiments>3</experiments>
</comment>
<comment type="interaction">
    <interactant intactId="EBI-740924">
        <id>Q9NZ81</id>
    </interactant>
    <interactant intactId="EBI-348380">
        <id>P25788</id>
        <label>PSMA3</label>
    </interactant>
    <organismsDiffer>false</organismsDiffer>
    <experiments>3</experiments>
</comment>
<comment type="interaction">
    <interactant intactId="EBI-740924">
        <id>Q9NZ81</id>
    </interactant>
    <interactant intactId="EBI-355546">
        <id>P61289</id>
        <label>PSME3</label>
    </interactant>
    <organismsDiffer>false</organismsDiffer>
    <experiments>6</experiments>
</comment>
<comment type="interaction">
    <interactant intactId="EBI-740924">
        <id>Q9NZ81</id>
    </interactant>
    <interactant intactId="EBI-2823850">
        <id>A0AV96</id>
        <label>RBM47</label>
    </interactant>
    <organismsDiffer>false</organismsDiffer>
    <experiments>3</experiments>
</comment>
<comment type="interaction">
    <interactant intactId="EBI-740924">
        <id>Q9NZ81</id>
    </interactant>
    <interactant intactId="EBI-727004">
        <id>O00560</id>
        <label>SDCBP</label>
    </interactant>
    <organismsDiffer>false</organismsDiffer>
    <experiments>3</experiments>
</comment>
<comment type="interaction">
    <interactant intactId="EBI-740924">
        <id>Q9NZ81</id>
    </interactant>
    <interactant intactId="EBI-742426">
        <id>Q9H190</id>
        <label>SDCBP2</label>
    </interactant>
    <organismsDiffer>false</organismsDiffer>
    <experiments>7</experiments>
</comment>
<comment type="interaction">
    <interactant intactId="EBI-740924">
        <id>Q9NZ81</id>
    </interactant>
    <interactant intactId="EBI-12275818">
        <id>Q53HV7-2</id>
        <label>SMUG1</label>
    </interactant>
    <organismsDiffer>false</organismsDiffer>
    <experiments>3</experiments>
</comment>
<comment type="interaction">
    <interactant intactId="EBI-740924">
        <id>Q9NZ81</id>
    </interactant>
    <interactant intactId="EBI-10268630">
        <id>Q8N9Q2</id>
        <label>SREK1IP1</label>
    </interactant>
    <organismsDiffer>false</organismsDiffer>
    <experiments>3</experiments>
</comment>
<comment type="interaction">
    <interactant intactId="EBI-740924">
        <id>Q9NZ81</id>
    </interactant>
    <interactant intactId="EBI-750459">
        <id>P30626</id>
        <label>SRI</label>
    </interactant>
    <organismsDiffer>false</organismsDiffer>
    <experiments>3</experiments>
</comment>
<comment type="interaction">
    <interactant intactId="EBI-740924">
        <id>Q9NZ81</id>
    </interactant>
    <interactant intactId="EBI-11064654">
        <id>Q01085-2</id>
        <label>TIAL1</label>
    </interactant>
    <organismsDiffer>false</organismsDiffer>
    <experiments>3</experiments>
</comment>
<comment type="interaction">
    <interactant intactId="EBI-740924">
        <id>Q9NZ81</id>
    </interactant>
    <interactant intactId="EBI-1049336">
        <id>O95379</id>
        <label>TNFAIP8</label>
    </interactant>
    <organismsDiffer>false</organismsDiffer>
    <experiments>6</experiments>
</comment>
<comment type="interaction">
    <interactant intactId="EBI-740924">
        <id>Q9NZ81</id>
    </interactant>
    <interactant intactId="EBI-358993">
        <id>Q15645</id>
        <label>TRIP13</label>
    </interactant>
    <organismsDiffer>false</organismsDiffer>
    <experiments>3</experiments>
</comment>
<comment type="interaction">
    <interactant intactId="EBI-740924">
        <id>Q9NZ81</id>
    </interactant>
    <interactant intactId="EBI-2107455">
        <id>Q08AM6</id>
        <label>VAC14</label>
    </interactant>
    <organismsDiffer>false</organismsDiffer>
    <experiments>6</experiments>
</comment>
<comment type="interaction">
    <interactant intactId="EBI-740924">
        <id>Q9NZ81</id>
    </interactant>
    <interactant intactId="EBI-597063">
        <id>Q8TBK6</id>
        <label>ZCCHC10</label>
    </interactant>
    <organismsDiffer>false</organismsDiffer>
    <experiments>4</experiments>
</comment>
<comment type="subcellular location">
    <subcellularLocation>
        <location evidence="2">Nucleus</location>
    </subcellularLocation>
</comment>
<comment type="alternative products">
    <event type="alternative splicing"/>
    <isoform>
        <id>Q9NZ81-1</id>
        <name>1</name>
        <sequence type="displayed"/>
    </isoform>
    <isoform>
        <id>Q9NZ81-2</id>
        <name>2</name>
        <sequence type="described" ref="VSP_024394"/>
    </isoform>
</comment>
<name>PRR13_HUMAN</name>
<feature type="chain" id="PRO_0000243946" description="Proline-rich protein 13">
    <location>
        <begin position="1"/>
        <end position="148"/>
    </location>
</feature>
<feature type="region of interest" description="Disordered" evidence="1">
    <location>
        <begin position="1"/>
        <end position="148"/>
    </location>
</feature>
<feature type="compositionally biased region" description="Pro residues" evidence="1">
    <location>
        <begin position="27"/>
        <end position="67"/>
    </location>
</feature>
<feature type="compositionally biased region" description="Pro residues" evidence="1">
    <location>
        <begin position="75"/>
        <end position="93"/>
    </location>
</feature>
<feature type="compositionally biased region" description="Basic residues" evidence="1">
    <location>
        <begin position="109"/>
        <end position="135"/>
    </location>
</feature>
<feature type="compositionally biased region" description="Low complexity" evidence="1">
    <location>
        <begin position="136"/>
        <end position="148"/>
    </location>
</feature>
<feature type="splice variant" id="VSP_024394" description="In isoform 2." evidence="3">
    <location>
        <begin position="7"/>
        <end position="56"/>
    </location>
</feature>
<feature type="sequence conflict" description="In Ref. 2; CAG38490." evidence="4" ref="2">
    <original>P</original>
    <variation>S</variation>
    <location>
        <position position="56"/>
    </location>
</feature>
<feature type="sequence conflict" description="In Ref. 5; AAH66943." evidence="4" ref="5">
    <original>P</original>
    <variation>L</variation>
    <location>
        <position position="73"/>
    </location>
</feature>
<feature type="sequence conflict" description="In Ref. 3; CAE45980." evidence="4" ref="3">
    <original>S</original>
    <variation>P</variation>
    <location>
        <position position="137"/>
    </location>
</feature>
<sequence>MWNPNAGQPGPNPYPPNIGCPGGSNPAHPPPINPPFPPGPCPPPPGAPHGNPAFPPGGPPHPVPQPGYPGCQPLGPYPPPYPPPAPGIPPVNPLAPGMVGPAVIVDKKMQKKMKKAHKKMHKHQKHHKYHKHGKHSSSSSSSSSSDSD</sequence>
<dbReference type="EMBL" id="AF217517">
    <property type="protein sequence ID" value="AAF67628.1"/>
    <property type="molecule type" value="mRNA"/>
</dbReference>
<dbReference type="EMBL" id="CR533459">
    <property type="protein sequence ID" value="CAG38490.1"/>
    <property type="molecule type" value="mRNA"/>
</dbReference>
<dbReference type="EMBL" id="BX640962">
    <property type="protein sequence ID" value="CAE45980.1"/>
    <property type="molecule type" value="mRNA"/>
</dbReference>
<dbReference type="EMBL" id="CH471054">
    <property type="protein sequence ID" value="EAW96703.1"/>
    <property type="molecule type" value="Genomic_DNA"/>
</dbReference>
<dbReference type="EMBL" id="BC014257">
    <property type="protein sequence ID" value="AAH14257.1"/>
    <property type="molecule type" value="mRNA"/>
</dbReference>
<dbReference type="EMBL" id="BC016064">
    <property type="protein sequence ID" value="AAH16064.1"/>
    <property type="molecule type" value="mRNA"/>
</dbReference>
<dbReference type="EMBL" id="BC066943">
    <property type="protein sequence ID" value="AAH66943.1"/>
    <property type="molecule type" value="mRNA"/>
</dbReference>
<dbReference type="EMBL" id="BK005847">
    <property type="protein sequence ID" value="DAA05782.1"/>
    <property type="molecule type" value="mRNA"/>
</dbReference>
<dbReference type="CCDS" id="CCDS31811.1">
    <molecule id="Q9NZ81-2"/>
</dbReference>
<dbReference type="CCDS" id="CCDS44899.1">
    <molecule id="Q9NZ81-1"/>
</dbReference>
<dbReference type="RefSeq" id="NP_001005354.1">
    <molecule id="Q9NZ81-2"/>
    <property type="nucleotide sequence ID" value="NM_001005354.3"/>
</dbReference>
<dbReference type="RefSeq" id="NP_060927.1">
    <molecule id="Q9NZ81-1"/>
    <property type="nucleotide sequence ID" value="NM_018457.4"/>
</dbReference>
<dbReference type="SMR" id="Q9NZ81"/>
<dbReference type="BioGRID" id="119965">
    <property type="interactions" value="55"/>
</dbReference>
<dbReference type="FunCoup" id="Q9NZ81">
    <property type="interactions" value="426"/>
</dbReference>
<dbReference type="IntAct" id="Q9NZ81">
    <property type="interactions" value="51"/>
</dbReference>
<dbReference type="MINT" id="Q9NZ81"/>
<dbReference type="STRING" id="9606.ENSP00000412064"/>
<dbReference type="iPTMnet" id="Q9NZ81"/>
<dbReference type="PhosphoSitePlus" id="Q9NZ81"/>
<dbReference type="BioMuta" id="PRR13"/>
<dbReference type="DMDM" id="74734721"/>
<dbReference type="MassIVE" id="Q9NZ81"/>
<dbReference type="PaxDb" id="9606-ENSP00000412064"/>
<dbReference type="PeptideAtlas" id="Q9NZ81"/>
<dbReference type="Antibodypedia" id="43374">
    <property type="antibodies" value="53 antibodies from 15 providers"/>
</dbReference>
<dbReference type="DNASU" id="54458"/>
<dbReference type="Ensembl" id="ENST00000379786.8">
    <molecule id="Q9NZ81-2"/>
    <property type="protein sequence ID" value="ENSP00000369112.4"/>
    <property type="gene ID" value="ENSG00000205352.11"/>
</dbReference>
<dbReference type="Ensembl" id="ENST00000429243.7">
    <molecule id="Q9NZ81-1"/>
    <property type="protein sequence ID" value="ENSP00000412064.2"/>
    <property type="gene ID" value="ENSG00000205352.11"/>
</dbReference>
<dbReference type="Ensembl" id="ENST00000549135.1">
    <molecule id="Q9NZ81-1"/>
    <property type="protein sequence ID" value="ENSP00000447777.1"/>
    <property type="gene ID" value="ENSG00000205352.11"/>
</dbReference>
<dbReference type="Ensembl" id="ENST00000549581.5">
    <molecule id="Q9NZ81-2"/>
    <property type="protein sequence ID" value="ENSP00000448153.1"/>
    <property type="gene ID" value="ENSG00000205352.11"/>
</dbReference>
<dbReference type="Ensembl" id="ENST00000549924.5">
    <molecule id="Q9NZ81-1"/>
    <property type="protein sequence ID" value="ENSP00000448761.1"/>
    <property type="gene ID" value="ENSG00000205352.11"/>
</dbReference>
<dbReference type="GeneID" id="54458"/>
<dbReference type="KEGG" id="hsa:54458"/>
<dbReference type="MANE-Select" id="ENST00000429243.7">
    <property type="protein sequence ID" value="ENSP00000412064.2"/>
    <property type="RefSeq nucleotide sequence ID" value="NM_018457.4"/>
    <property type="RefSeq protein sequence ID" value="NP_060927.1"/>
</dbReference>
<dbReference type="UCSC" id="uc001scy.5">
    <molecule id="Q9NZ81-1"/>
    <property type="organism name" value="human"/>
</dbReference>
<dbReference type="AGR" id="HGNC:24528"/>
<dbReference type="CTD" id="54458"/>
<dbReference type="DisGeNET" id="54458"/>
<dbReference type="GeneCards" id="PRR13"/>
<dbReference type="HGNC" id="HGNC:24528">
    <property type="gene designation" value="PRR13"/>
</dbReference>
<dbReference type="HPA" id="ENSG00000205352">
    <property type="expression patterns" value="Low tissue specificity"/>
</dbReference>
<dbReference type="MIM" id="610459">
    <property type="type" value="gene"/>
</dbReference>
<dbReference type="neXtProt" id="NX_Q9NZ81"/>
<dbReference type="OpenTargets" id="ENSG00000205352"/>
<dbReference type="PharmGKB" id="PA143485583"/>
<dbReference type="VEuPathDB" id="HostDB:ENSG00000205352"/>
<dbReference type="eggNOG" id="ENOG502R4RR">
    <property type="taxonomic scope" value="Eukaryota"/>
</dbReference>
<dbReference type="GeneTree" id="ENSGT00730000111608"/>
<dbReference type="HOGENOM" id="CLU_2432475_0_0_1"/>
<dbReference type="InParanoid" id="Q9NZ81"/>
<dbReference type="OMA" id="VNPACPP"/>
<dbReference type="OrthoDB" id="9540233at2759"/>
<dbReference type="PAN-GO" id="Q9NZ81">
    <property type="GO annotations" value="1 GO annotation based on evolutionary models"/>
</dbReference>
<dbReference type="PathwayCommons" id="Q9NZ81"/>
<dbReference type="SignaLink" id="Q9NZ81"/>
<dbReference type="BioGRID-ORCS" id="54458">
    <property type="hits" value="238 hits in 1151 CRISPR screens"/>
</dbReference>
<dbReference type="ChiTaRS" id="PRR13">
    <property type="organism name" value="human"/>
</dbReference>
<dbReference type="GenomeRNAi" id="54458"/>
<dbReference type="Pharos" id="Q9NZ81">
    <property type="development level" value="Tbio"/>
</dbReference>
<dbReference type="PRO" id="PR:Q9NZ81"/>
<dbReference type="Proteomes" id="UP000005640">
    <property type="component" value="Chromosome 12"/>
</dbReference>
<dbReference type="RNAct" id="Q9NZ81">
    <property type="molecule type" value="protein"/>
</dbReference>
<dbReference type="Bgee" id="ENSG00000205352">
    <property type="expression patterns" value="Expressed in mucosa of transverse colon and 98 other cell types or tissues"/>
</dbReference>
<dbReference type="ExpressionAtlas" id="Q9NZ81">
    <property type="expression patterns" value="baseline and differential"/>
</dbReference>
<dbReference type="GO" id="GO:0005829">
    <property type="term" value="C:cytosol"/>
    <property type="evidence" value="ECO:0000314"/>
    <property type="project" value="HPA"/>
</dbReference>
<dbReference type="GO" id="GO:0005654">
    <property type="term" value="C:nucleoplasm"/>
    <property type="evidence" value="ECO:0000314"/>
    <property type="project" value="HPA"/>
</dbReference>
<dbReference type="PANTHER" id="PTHR36287">
    <property type="match status" value="1"/>
</dbReference>
<dbReference type="PANTHER" id="PTHR36287:SF1">
    <property type="entry name" value="PROLINE-RICH PROTEIN 13"/>
    <property type="match status" value="1"/>
</dbReference>
<keyword id="KW-0025">Alternative splicing</keyword>
<keyword id="KW-0539">Nucleus</keyword>
<keyword id="KW-1267">Proteomics identification</keyword>
<keyword id="KW-1185">Reference proteome</keyword>
<keyword id="KW-0804">Transcription</keyword>
<keyword id="KW-0805">Transcription regulation</keyword>
<protein>
    <recommendedName>
        <fullName>Proline-rich protein 13</fullName>
    </recommendedName>
    <alternativeName>
        <fullName>Taxane-resistance protein</fullName>
    </alternativeName>
</protein>
<gene>
    <name type="primary">PRR13</name>
    <name type="synonym">TXR1</name>
    <name type="ORF">BM-041</name>
</gene>
<evidence type="ECO:0000256" key="1">
    <source>
        <dbReference type="SAM" id="MobiDB-lite"/>
    </source>
</evidence>
<evidence type="ECO:0000269" key="2">
    <source>
    </source>
</evidence>
<evidence type="ECO:0000303" key="3">
    <source>
    </source>
</evidence>
<evidence type="ECO:0000305" key="4"/>